<name>ATPF_DEHM1</name>
<gene>
    <name evidence="1" type="primary">atpF</name>
    <name type="ordered locus">DET0560</name>
</gene>
<keyword id="KW-0066">ATP synthesis</keyword>
<keyword id="KW-1003">Cell membrane</keyword>
<keyword id="KW-0138">CF(0)</keyword>
<keyword id="KW-0375">Hydrogen ion transport</keyword>
<keyword id="KW-0406">Ion transport</keyword>
<keyword id="KW-0472">Membrane</keyword>
<keyword id="KW-0812">Transmembrane</keyword>
<keyword id="KW-1133">Transmembrane helix</keyword>
<keyword id="KW-0813">Transport</keyword>
<proteinExistence type="inferred from homology"/>
<protein>
    <recommendedName>
        <fullName evidence="1">ATP synthase subunit b</fullName>
    </recommendedName>
    <alternativeName>
        <fullName evidence="1">ATP synthase F(0) sector subunit b</fullName>
    </alternativeName>
    <alternativeName>
        <fullName evidence="1">ATPase subunit I</fullName>
    </alternativeName>
    <alternativeName>
        <fullName evidence="1">F-type ATPase subunit b</fullName>
        <shortName evidence="1">F-ATPase subunit b</shortName>
    </alternativeName>
</protein>
<feature type="chain" id="PRO_0000368452" description="ATP synthase subunit b">
    <location>
        <begin position="1"/>
        <end position="169"/>
    </location>
</feature>
<feature type="transmembrane region" description="Helical" evidence="1">
    <location>
        <begin position="11"/>
        <end position="31"/>
    </location>
</feature>
<evidence type="ECO:0000255" key="1">
    <source>
        <dbReference type="HAMAP-Rule" id="MF_01398"/>
    </source>
</evidence>
<reference key="1">
    <citation type="journal article" date="2005" name="Science">
        <title>Genome sequence of the PCE-dechlorinating bacterium Dehalococcoides ethenogenes.</title>
        <authorList>
            <person name="Seshadri R."/>
            <person name="Adrian L."/>
            <person name="Fouts D.E."/>
            <person name="Eisen J.A."/>
            <person name="Phillippy A.M."/>
            <person name="Methe B.A."/>
            <person name="Ward N.L."/>
            <person name="Nelson W.C."/>
            <person name="DeBoy R.T."/>
            <person name="Khouri H.M."/>
            <person name="Kolonay J.F."/>
            <person name="Dodson R.J."/>
            <person name="Daugherty S.C."/>
            <person name="Brinkac L.M."/>
            <person name="Sullivan S.A."/>
            <person name="Madupu R."/>
            <person name="Nelson K.E."/>
            <person name="Kang K.H."/>
            <person name="Impraim M."/>
            <person name="Tran K."/>
            <person name="Robinson J.M."/>
            <person name="Forberger H.A."/>
            <person name="Fraser C.M."/>
            <person name="Zinder S.H."/>
            <person name="Heidelberg J.F."/>
        </authorList>
    </citation>
    <scope>NUCLEOTIDE SEQUENCE [LARGE SCALE GENOMIC DNA]</scope>
    <source>
        <strain>ATCC BAA-2266 / KCTC 15142 / 195</strain>
    </source>
</reference>
<dbReference type="EMBL" id="CP000027">
    <property type="protein sequence ID" value="AAW40135.1"/>
    <property type="molecule type" value="Genomic_DNA"/>
</dbReference>
<dbReference type="RefSeq" id="WP_010936336.1">
    <property type="nucleotide sequence ID" value="NC_002936.3"/>
</dbReference>
<dbReference type="SMR" id="Q3Z8Z6"/>
<dbReference type="FunCoup" id="Q3Z8Z6">
    <property type="interactions" value="70"/>
</dbReference>
<dbReference type="STRING" id="243164.DET0560"/>
<dbReference type="GeneID" id="3230098"/>
<dbReference type="KEGG" id="det:DET0560"/>
<dbReference type="eggNOG" id="COG0711">
    <property type="taxonomic scope" value="Bacteria"/>
</dbReference>
<dbReference type="HOGENOM" id="CLU_079215_4_4_0"/>
<dbReference type="InParanoid" id="Q3Z8Z6"/>
<dbReference type="Proteomes" id="UP000008289">
    <property type="component" value="Chromosome"/>
</dbReference>
<dbReference type="GO" id="GO:0005886">
    <property type="term" value="C:plasma membrane"/>
    <property type="evidence" value="ECO:0007669"/>
    <property type="project" value="UniProtKB-SubCell"/>
</dbReference>
<dbReference type="GO" id="GO:0045259">
    <property type="term" value="C:proton-transporting ATP synthase complex"/>
    <property type="evidence" value="ECO:0007669"/>
    <property type="project" value="UniProtKB-KW"/>
</dbReference>
<dbReference type="GO" id="GO:0046933">
    <property type="term" value="F:proton-transporting ATP synthase activity, rotational mechanism"/>
    <property type="evidence" value="ECO:0007669"/>
    <property type="project" value="UniProtKB-UniRule"/>
</dbReference>
<dbReference type="GO" id="GO:0046961">
    <property type="term" value="F:proton-transporting ATPase activity, rotational mechanism"/>
    <property type="evidence" value="ECO:0007669"/>
    <property type="project" value="TreeGrafter"/>
</dbReference>
<dbReference type="CDD" id="cd06503">
    <property type="entry name" value="ATP-synt_Fo_b"/>
    <property type="match status" value="1"/>
</dbReference>
<dbReference type="Gene3D" id="1.20.5.620">
    <property type="entry name" value="F1F0 ATP synthase subunit B, membrane domain"/>
    <property type="match status" value="1"/>
</dbReference>
<dbReference type="HAMAP" id="MF_01398">
    <property type="entry name" value="ATP_synth_b_bprime"/>
    <property type="match status" value="1"/>
</dbReference>
<dbReference type="InterPro" id="IPR028987">
    <property type="entry name" value="ATP_synth_B-like_membr_sf"/>
</dbReference>
<dbReference type="InterPro" id="IPR002146">
    <property type="entry name" value="ATP_synth_b/b'su_bac/chlpt"/>
</dbReference>
<dbReference type="InterPro" id="IPR005864">
    <property type="entry name" value="ATP_synth_F0_bsu_bac"/>
</dbReference>
<dbReference type="InterPro" id="IPR050059">
    <property type="entry name" value="ATP_synthase_B_chain"/>
</dbReference>
<dbReference type="NCBIfam" id="TIGR01144">
    <property type="entry name" value="ATP_synt_b"/>
    <property type="match status" value="1"/>
</dbReference>
<dbReference type="PANTHER" id="PTHR33445:SF1">
    <property type="entry name" value="ATP SYNTHASE SUBUNIT B"/>
    <property type="match status" value="1"/>
</dbReference>
<dbReference type="PANTHER" id="PTHR33445">
    <property type="entry name" value="ATP SYNTHASE SUBUNIT B', CHLOROPLASTIC"/>
    <property type="match status" value="1"/>
</dbReference>
<dbReference type="Pfam" id="PF00430">
    <property type="entry name" value="ATP-synt_B"/>
    <property type="match status" value="1"/>
</dbReference>
<dbReference type="SUPFAM" id="SSF81573">
    <property type="entry name" value="F1F0 ATP synthase subunit B, membrane domain"/>
    <property type="match status" value="1"/>
</dbReference>
<sequence>MEKLAELGINIPSFIAQVVNFGLLLGLLYLFAYKPILAKLDERSARIKESMERTDQVKEQAQRAEEEFKKKIGEASQQGQLVIERAVKTGDEIRQKAIEEARAEAEAMLSRARTEIRQERDEVVDQLRKEFAELTILAAGKVIDQSLDKKAHQALIDSVLENSTNLRKN</sequence>
<accession>Q3Z8Z6</accession>
<comment type="function">
    <text evidence="1">F(1)F(0) ATP synthase produces ATP from ADP in the presence of a proton or sodium gradient. F-type ATPases consist of two structural domains, F(1) containing the extramembraneous catalytic core and F(0) containing the membrane proton channel, linked together by a central stalk and a peripheral stalk. During catalysis, ATP synthesis in the catalytic domain of F(1) is coupled via a rotary mechanism of the central stalk subunits to proton translocation.</text>
</comment>
<comment type="function">
    <text evidence="1">Component of the F(0) channel, it forms part of the peripheral stalk, linking F(1) to F(0).</text>
</comment>
<comment type="subunit">
    <text evidence="1">F-type ATPases have 2 components, F(1) - the catalytic core - and F(0) - the membrane proton channel. F(1) has five subunits: alpha(3), beta(3), gamma(1), delta(1), epsilon(1). F(0) has three main subunits: a(1), b(2) and c(10-14). The alpha and beta chains form an alternating ring which encloses part of the gamma chain. F(1) is attached to F(0) by a central stalk formed by the gamma and epsilon chains, while a peripheral stalk is formed by the delta and b chains.</text>
</comment>
<comment type="subcellular location">
    <subcellularLocation>
        <location evidence="1">Cell membrane</location>
        <topology evidence="1">Single-pass membrane protein</topology>
    </subcellularLocation>
</comment>
<comment type="similarity">
    <text evidence="1">Belongs to the ATPase B chain family.</text>
</comment>
<organism>
    <name type="scientific">Dehalococcoides mccartyi (strain ATCC BAA-2266 / KCTC 15142 / 195)</name>
    <name type="common">Dehalococcoides ethenogenes (strain 195)</name>
    <dbReference type="NCBI Taxonomy" id="243164"/>
    <lineage>
        <taxon>Bacteria</taxon>
        <taxon>Bacillati</taxon>
        <taxon>Chloroflexota</taxon>
        <taxon>Dehalococcoidia</taxon>
        <taxon>Dehalococcoidales</taxon>
        <taxon>Dehalococcoidaceae</taxon>
        <taxon>Dehalococcoides</taxon>
    </lineage>
</organism>